<gene>
    <name type="primary">BTBD9</name>
</gene>
<feature type="chain" id="PRO_0000356174" description="BTB/POZ domain-containing protein 9">
    <location>
        <begin position="1"/>
        <end position="611"/>
    </location>
</feature>
<feature type="domain" description="BTB" evidence="1">
    <location>
        <begin position="36"/>
        <end position="104"/>
    </location>
</feature>
<feature type="domain" description="BACK">
    <location>
        <begin position="142"/>
        <end position="240"/>
    </location>
</feature>
<feature type="region of interest" description="Disordered" evidence="2">
    <location>
        <begin position="560"/>
        <end position="611"/>
    </location>
</feature>
<feature type="compositionally biased region" description="Low complexity" evidence="2">
    <location>
        <begin position="586"/>
        <end position="611"/>
    </location>
</feature>
<proteinExistence type="evidence at transcript level"/>
<reference key="1">
    <citation type="submission" date="2007-03" db="EMBL/GenBank/DDBJ databases">
        <authorList>
            <consortium name="NIH - Mammalian Gene Collection (MGC) project"/>
        </authorList>
    </citation>
    <scope>NUCLEOTIDE SEQUENCE [LARGE SCALE MRNA]</scope>
    <source>
        <strain>Hereford</strain>
        <tissue>Basal ganglia</tissue>
    </source>
</reference>
<organism>
    <name type="scientific">Bos taurus</name>
    <name type="common">Bovine</name>
    <dbReference type="NCBI Taxonomy" id="9913"/>
    <lineage>
        <taxon>Eukaryota</taxon>
        <taxon>Metazoa</taxon>
        <taxon>Chordata</taxon>
        <taxon>Craniata</taxon>
        <taxon>Vertebrata</taxon>
        <taxon>Euteleostomi</taxon>
        <taxon>Mammalia</taxon>
        <taxon>Eutheria</taxon>
        <taxon>Laurasiatheria</taxon>
        <taxon>Artiodactyla</taxon>
        <taxon>Ruminantia</taxon>
        <taxon>Pecora</taxon>
        <taxon>Bovidae</taxon>
        <taxon>Bovinae</taxon>
        <taxon>Bos</taxon>
    </lineage>
</organism>
<keyword id="KW-1185">Reference proteome</keyword>
<dbReference type="EMBL" id="BC134567">
    <property type="protein sequence ID" value="AAI34568.2"/>
    <property type="molecule type" value="mRNA"/>
</dbReference>
<dbReference type="RefSeq" id="NP_001121970.1">
    <property type="nucleotide sequence ID" value="NM_001128498.1"/>
</dbReference>
<dbReference type="SMR" id="A4IFG2"/>
<dbReference type="FunCoup" id="A4IFG2">
    <property type="interactions" value="2776"/>
</dbReference>
<dbReference type="STRING" id="9913.ENSBTAP00000073745"/>
<dbReference type="PaxDb" id="9913-ENSBTAP00000000688"/>
<dbReference type="GeneID" id="505504"/>
<dbReference type="KEGG" id="bta:505504"/>
<dbReference type="CTD" id="114781"/>
<dbReference type="eggNOG" id="KOG4350">
    <property type="taxonomic scope" value="Eukaryota"/>
</dbReference>
<dbReference type="HOGENOM" id="CLU_004253_0_0_1"/>
<dbReference type="InParanoid" id="A4IFG2"/>
<dbReference type="OrthoDB" id="9997739at2759"/>
<dbReference type="Proteomes" id="UP000009136">
    <property type="component" value="Unplaced"/>
</dbReference>
<dbReference type="GO" id="GO:0005737">
    <property type="term" value="C:cytoplasm"/>
    <property type="evidence" value="ECO:0000318"/>
    <property type="project" value="GO_Central"/>
</dbReference>
<dbReference type="GO" id="GO:0008344">
    <property type="term" value="P:adult locomotory behavior"/>
    <property type="evidence" value="ECO:0000318"/>
    <property type="project" value="GO_Central"/>
</dbReference>
<dbReference type="GO" id="GO:0048512">
    <property type="term" value="P:circadian behavior"/>
    <property type="evidence" value="ECO:0000318"/>
    <property type="project" value="GO_Central"/>
</dbReference>
<dbReference type="GO" id="GO:0050804">
    <property type="term" value="P:modulation of chemical synaptic transmission"/>
    <property type="evidence" value="ECO:0000318"/>
    <property type="project" value="GO_Central"/>
</dbReference>
<dbReference type="CDD" id="cd14822">
    <property type="entry name" value="BACK_BTBD9"/>
    <property type="match status" value="1"/>
</dbReference>
<dbReference type="CDD" id="cd18287">
    <property type="entry name" value="BTB_POZ_BTBD9"/>
    <property type="match status" value="1"/>
</dbReference>
<dbReference type="FunFam" id="1.25.40.420:FF:000005">
    <property type="entry name" value="BTB/POZ domain-containing protein 9"/>
    <property type="match status" value="1"/>
</dbReference>
<dbReference type="FunFam" id="2.60.120.260:FF:000038">
    <property type="entry name" value="BTB/POZ domain-containing protein 9"/>
    <property type="match status" value="1"/>
</dbReference>
<dbReference type="FunFam" id="2.60.120.260:FF:000051">
    <property type="entry name" value="BTB/POZ domain-containing protein 9"/>
    <property type="match status" value="1"/>
</dbReference>
<dbReference type="FunFam" id="3.30.710.10:FF:000042">
    <property type="entry name" value="BTB/POZ domain-containing protein 9"/>
    <property type="match status" value="1"/>
</dbReference>
<dbReference type="Gene3D" id="1.25.40.420">
    <property type="match status" value="1"/>
</dbReference>
<dbReference type="Gene3D" id="2.60.120.260">
    <property type="entry name" value="Galactose-binding domain-like"/>
    <property type="match status" value="2"/>
</dbReference>
<dbReference type="Gene3D" id="3.30.710.10">
    <property type="entry name" value="Potassium Channel Kv1.1, Chain A"/>
    <property type="match status" value="1"/>
</dbReference>
<dbReference type="InterPro" id="IPR011705">
    <property type="entry name" value="BACK"/>
</dbReference>
<dbReference type="InterPro" id="IPR000210">
    <property type="entry name" value="BTB/POZ_dom"/>
</dbReference>
<dbReference type="InterPro" id="IPR052407">
    <property type="entry name" value="BTB_POZ_domain_cont_9"/>
</dbReference>
<dbReference type="InterPro" id="IPR034091">
    <property type="entry name" value="BTBD9_BACK-like_dom"/>
</dbReference>
<dbReference type="InterPro" id="IPR000421">
    <property type="entry name" value="FA58C"/>
</dbReference>
<dbReference type="InterPro" id="IPR008979">
    <property type="entry name" value="Galactose-bd-like_sf"/>
</dbReference>
<dbReference type="InterPro" id="IPR011333">
    <property type="entry name" value="SKP1/BTB/POZ_sf"/>
</dbReference>
<dbReference type="PANTHER" id="PTHR46306">
    <property type="entry name" value="BTB/POZ DOMAIN-CONTAINING PROTEIN 9"/>
    <property type="match status" value="1"/>
</dbReference>
<dbReference type="PANTHER" id="PTHR46306:SF1">
    <property type="entry name" value="BTB_POZ DOMAIN-CONTAINING PROTEIN 9"/>
    <property type="match status" value="1"/>
</dbReference>
<dbReference type="Pfam" id="PF07707">
    <property type="entry name" value="BACK"/>
    <property type="match status" value="1"/>
</dbReference>
<dbReference type="Pfam" id="PF00651">
    <property type="entry name" value="BTB"/>
    <property type="match status" value="1"/>
</dbReference>
<dbReference type="Pfam" id="PF00754">
    <property type="entry name" value="F5_F8_type_C"/>
    <property type="match status" value="2"/>
</dbReference>
<dbReference type="SMART" id="SM00875">
    <property type="entry name" value="BACK"/>
    <property type="match status" value="1"/>
</dbReference>
<dbReference type="SMART" id="SM00225">
    <property type="entry name" value="BTB"/>
    <property type="match status" value="1"/>
</dbReference>
<dbReference type="SUPFAM" id="SSF49785">
    <property type="entry name" value="Galactose-binding domain-like"/>
    <property type="match status" value="2"/>
</dbReference>
<dbReference type="SUPFAM" id="SSF54695">
    <property type="entry name" value="POZ domain"/>
    <property type="match status" value="1"/>
</dbReference>
<dbReference type="PROSITE" id="PS50097">
    <property type="entry name" value="BTB"/>
    <property type="match status" value="1"/>
</dbReference>
<name>BTBD9_BOVIN</name>
<sequence>MSNSHPLRPFTAVGEIDHVHILSEHIGALLIGEEYGDVTFVVEKKRFPAHRVILAARCQYFRALLYGGMRESQPEAEIPLEDTTAEAFTMLLKYIYTGRATLTDEKEEVLLDFLSLAHKYGFPELEDSTSEYLCTILNIQNVCMTFDVASLYSLPKLTCMCCMFMDRNAQEVLSSEGFLSLSKTALLNIVLRDSFAAPEKDIFLALLNWCKHNSNENHAEIMQAVRLPLMSLTELLNVVRPSGLLSPDAILDAIKVRSESRDMDLNYRGMLIPEENIATMKYGAQVVKGELKSALLDGDTQNYDLDHGFSRHPIDDDCRSGIEIKLGQPSIINHIRILLWDRDSRSYSYFIEVSMDELDWIRVIDHSQYLCRSWQKLYFPARVCRYIRIVGTHNTVNKIFHIVAFECMFTNKTFTLEKGLIVPMENVATIADCASVIEGVSRSRNALLNGDTKNYDWDSSYTCHQLGSGAIVVQLAQPYMIGSIRLLLWDCDDRSYSYYVEVSTNQQQWTMVADRTKVSCKSWQSVTFERRPASFIRIVGTHNTANEVFHCVHFECPEQQSAQKDSSDEPGTGGASAAGQQLDPHALQAPSGSSLPSSPGSNSRSPNRQHQ</sequence>
<protein>
    <recommendedName>
        <fullName>BTB/POZ domain-containing protein 9</fullName>
    </recommendedName>
</protein>
<evidence type="ECO:0000255" key="1">
    <source>
        <dbReference type="PROSITE-ProRule" id="PRU00037"/>
    </source>
</evidence>
<evidence type="ECO:0000256" key="2">
    <source>
        <dbReference type="SAM" id="MobiDB-lite"/>
    </source>
</evidence>
<accession>A4IFG2</accession>